<organism>
    <name type="scientific">Escherichia coli O157:H7 (strain EC4115 / EHEC)</name>
    <dbReference type="NCBI Taxonomy" id="444450"/>
    <lineage>
        <taxon>Bacteria</taxon>
        <taxon>Pseudomonadati</taxon>
        <taxon>Pseudomonadota</taxon>
        <taxon>Gammaproteobacteria</taxon>
        <taxon>Enterobacterales</taxon>
        <taxon>Enterobacteriaceae</taxon>
        <taxon>Escherichia</taxon>
    </lineage>
</organism>
<comment type="function">
    <text evidence="1">Catalyzes the attachment of serine to tRNA(Ser). Is also able to aminoacylate tRNA(Sec) with serine, to form the misacylated tRNA L-seryl-tRNA(Sec), which will be further converted into selenocysteinyl-tRNA(Sec).</text>
</comment>
<comment type="catalytic activity">
    <reaction evidence="1">
        <text>tRNA(Ser) + L-serine + ATP = L-seryl-tRNA(Ser) + AMP + diphosphate + H(+)</text>
        <dbReference type="Rhea" id="RHEA:12292"/>
        <dbReference type="Rhea" id="RHEA-COMP:9669"/>
        <dbReference type="Rhea" id="RHEA-COMP:9703"/>
        <dbReference type="ChEBI" id="CHEBI:15378"/>
        <dbReference type="ChEBI" id="CHEBI:30616"/>
        <dbReference type="ChEBI" id="CHEBI:33019"/>
        <dbReference type="ChEBI" id="CHEBI:33384"/>
        <dbReference type="ChEBI" id="CHEBI:78442"/>
        <dbReference type="ChEBI" id="CHEBI:78533"/>
        <dbReference type="ChEBI" id="CHEBI:456215"/>
        <dbReference type="EC" id="6.1.1.11"/>
    </reaction>
</comment>
<comment type="catalytic activity">
    <reaction evidence="1">
        <text>tRNA(Sec) + L-serine + ATP = L-seryl-tRNA(Sec) + AMP + diphosphate + H(+)</text>
        <dbReference type="Rhea" id="RHEA:42580"/>
        <dbReference type="Rhea" id="RHEA-COMP:9742"/>
        <dbReference type="Rhea" id="RHEA-COMP:10128"/>
        <dbReference type="ChEBI" id="CHEBI:15378"/>
        <dbReference type="ChEBI" id="CHEBI:30616"/>
        <dbReference type="ChEBI" id="CHEBI:33019"/>
        <dbReference type="ChEBI" id="CHEBI:33384"/>
        <dbReference type="ChEBI" id="CHEBI:78442"/>
        <dbReference type="ChEBI" id="CHEBI:78533"/>
        <dbReference type="ChEBI" id="CHEBI:456215"/>
        <dbReference type="EC" id="6.1.1.11"/>
    </reaction>
</comment>
<comment type="pathway">
    <text evidence="1">Aminoacyl-tRNA biosynthesis; selenocysteinyl-tRNA(Sec) biosynthesis; L-seryl-tRNA(Sec) from L-serine and tRNA(Sec): step 1/1.</text>
</comment>
<comment type="subunit">
    <text evidence="1">Homodimer. The tRNA molecule binds across the dimer.</text>
</comment>
<comment type="subcellular location">
    <subcellularLocation>
        <location evidence="1">Cytoplasm</location>
    </subcellularLocation>
</comment>
<comment type="domain">
    <text evidence="1">Consists of two distinct domains, a catalytic core and a N-terminal extension that is involved in tRNA binding.</text>
</comment>
<comment type="similarity">
    <text evidence="1">Belongs to the class-II aminoacyl-tRNA synthetase family. Type-1 seryl-tRNA synthetase subfamily.</text>
</comment>
<keyword id="KW-0030">Aminoacyl-tRNA synthetase</keyword>
<keyword id="KW-0067">ATP-binding</keyword>
<keyword id="KW-0963">Cytoplasm</keyword>
<keyword id="KW-0436">Ligase</keyword>
<keyword id="KW-0547">Nucleotide-binding</keyword>
<keyword id="KW-0648">Protein biosynthesis</keyword>
<evidence type="ECO:0000255" key="1">
    <source>
        <dbReference type="HAMAP-Rule" id="MF_00176"/>
    </source>
</evidence>
<reference key="1">
    <citation type="journal article" date="2011" name="Proc. Natl. Acad. Sci. U.S.A.">
        <title>Genomic anatomy of Escherichia coli O157:H7 outbreaks.</title>
        <authorList>
            <person name="Eppinger M."/>
            <person name="Mammel M.K."/>
            <person name="Leclerc J.E."/>
            <person name="Ravel J."/>
            <person name="Cebula T.A."/>
        </authorList>
    </citation>
    <scope>NUCLEOTIDE SEQUENCE [LARGE SCALE GENOMIC DNA]</scope>
    <source>
        <strain>EC4115 / EHEC</strain>
    </source>
</reference>
<gene>
    <name evidence="1" type="primary">serS</name>
    <name type="ordered locus">ECH74115_1055</name>
</gene>
<proteinExistence type="inferred from homology"/>
<accession>B5YT28</accession>
<protein>
    <recommendedName>
        <fullName evidence="1">Serine--tRNA ligase</fullName>
        <ecNumber evidence="1">6.1.1.11</ecNumber>
    </recommendedName>
    <alternativeName>
        <fullName evidence="1">Seryl-tRNA synthetase</fullName>
        <shortName evidence="1">SerRS</shortName>
    </alternativeName>
    <alternativeName>
        <fullName evidence="1">Seryl-tRNA(Ser/Sec) synthetase</fullName>
    </alternativeName>
</protein>
<sequence>MLDPNLLRNEPDAVAEKLARRGFKLDVDKLGALEERRKVLQVKTENLQAERNSRSKSIGQAKARGEDIEPLRLEVNKLGEELDAAKAELDALQAEIRDIALTIPNLPADEVPVGKDENDNVEVSRWGTPREFDFEVRDHVTLGEMHSGLDFAAAVKLTGSRFVVMKGQIARMHRALSQFMLDLHTEQHGYSENYVPYLVNQDTLYGTGQLPKFAGDLFHTRPLEEEADTSNYALIPTAEVPLTNLVRGEIIDEDDLPIKMTAHTPCFRSEAGSYGRDTRGLIRMHQFDKVEMVQIVRPEDSMAALEEMTGHAEKVLQLLGLPYRKIILCTGDMGFGACKTYDLEVWIPAQNTYREISSCSNVWDFQARRMQARCRSKSDKKTRLVHTLNGSGLAVGRTLVAVMENYQQADGRIEVPEVLRPYMNGLEYIG</sequence>
<feature type="chain" id="PRO_1000098063" description="Serine--tRNA ligase">
    <location>
        <begin position="1"/>
        <end position="430"/>
    </location>
</feature>
<feature type="binding site" evidence="1">
    <location>
        <begin position="237"/>
        <end position="239"/>
    </location>
    <ligand>
        <name>L-serine</name>
        <dbReference type="ChEBI" id="CHEBI:33384"/>
    </ligand>
</feature>
<feature type="binding site" evidence="1">
    <location>
        <begin position="268"/>
        <end position="270"/>
    </location>
    <ligand>
        <name>ATP</name>
        <dbReference type="ChEBI" id="CHEBI:30616"/>
    </ligand>
</feature>
<feature type="binding site" evidence="1">
    <location>
        <position position="291"/>
    </location>
    <ligand>
        <name>L-serine</name>
        <dbReference type="ChEBI" id="CHEBI:33384"/>
    </ligand>
</feature>
<feature type="binding site" evidence="1">
    <location>
        <begin position="355"/>
        <end position="358"/>
    </location>
    <ligand>
        <name>ATP</name>
        <dbReference type="ChEBI" id="CHEBI:30616"/>
    </ligand>
</feature>
<feature type="binding site" evidence="1">
    <location>
        <position position="391"/>
    </location>
    <ligand>
        <name>L-serine</name>
        <dbReference type="ChEBI" id="CHEBI:33384"/>
    </ligand>
</feature>
<dbReference type="EC" id="6.1.1.11" evidence="1"/>
<dbReference type="EMBL" id="CP001164">
    <property type="protein sequence ID" value="ACI35429.1"/>
    <property type="molecule type" value="Genomic_DNA"/>
</dbReference>
<dbReference type="RefSeq" id="WP_000886683.1">
    <property type="nucleotide sequence ID" value="NC_011353.1"/>
</dbReference>
<dbReference type="SMR" id="B5YT28"/>
<dbReference type="GeneID" id="93776527"/>
<dbReference type="KEGG" id="ecf:ECH74115_1055"/>
<dbReference type="HOGENOM" id="CLU_023797_1_1_6"/>
<dbReference type="UniPathway" id="UPA00906">
    <property type="reaction ID" value="UER00895"/>
</dbReference>
<dbReference type="GO" id="GO:0005737">
    <property type="term" value="C:cytoplasm"/>
    <property type="evidence" value="ECO:0007669"/>
    <property type="project" value="UniProtKB-SubCell"/>
</dbReference>
<dbReference type="GO" id="GO:0005524">
    <property type="term" value="F:ATP binding"/>
    <property type="evidence" value="ECO:0007669"/>
    <property type="project" value="UniProtKB-UniRule"/>
</dbReference>
<dbReference type="GO" id="GO:0004828">
    <property type="term" value="F:serine-tRNA ligase activity"/>
    <property type="evidence" value="ECO:0007669"/>
    <property type="project" value="UniProtKB-UniRule"/>
</dbReference>
<dbReference type="GO" id="GO:0016260">
    <property type="term" value="P:selenocysteine biosynthetic process"/>
    <property type="evidence" value="ECO:0007669"/>
    <property type="project" value="UniProtKB-UniRule"/>
</dbReference>
<dbReference type="GO" id="GO:0006434">
    <property type="term" value="P:seryl-tRNA aminoacylation"/>
    <property type="evidence" value="ECO:0007669"/>
    <property type="project" value="UniProtKB-UniRule"/>
</dbReference>
<dbReference type="CDD" id="cd00770">
    <property type="entry name" value="SerRS_core"/>
    <property type="match status" value="1"/>
</dbReference>
<dbReference type="FunFam" id="1.10.287.40:FF:000001">
    <property type="entry name" value="Serine--tRNA ligase"/>
    <property type="match status" value="1"/>
</dbReference>
<dbReference type="FunFam" id="3.30.930.10:FF:000018">
    <property type="entry name" value="Serine--tRNA ligase"/>
    <property type="match status" value="1"/>
</dbReference>
<dbReference type="Gene3D" id="3.30.930.10">
    <property type="entry name" value="Bira Bifunctional Protein, Domain 2"/>
    <property type="match status" value="1"/>
</dbReference>
<dbReference type="Gene3D" id="1.10.287.40">
    <property type="entry name" value="Serine-tRNA synthetase, tRNA binding domain"/>
    <property type="match status" value="1"/>
</dbReference>
<dbReference type="HAMAP" id="MF_00176">
    <property type="entry name" value="Ser_tRNA_synth_type1"/>
    <property type="match status" value="1"/>
</dbReference>
<dbReference type="InterPro" id="IPR002314">
    <property type="entry name" value="aa-tRNA-synt_IIb"/>
</dbReference>
<dbReference type="InterPro" id="IPR006195">
    <property type="entry name" value="aa-tRNA-synth_II"/>
</dbReference>
<dbReference type="InterPro" id="IPR045864">
    <property type="entry name" value="aa-tRNA-synth_II/BPL/LPL"/>
</dbReference>
<dbReference type="InterPro" id="IPR002317">
    <property type="entry name" value="Ser-tRNA-ligase_type_1"/>
</dbReference>
<dbReference type="InterPro" id="IPR015866">
    <property type="entry name" value="Ser-tRNA-synth_1_N"/>
</dbReference>
<dbReference type="InterPro" id="IPR042103">
    <property type="entry name" value="SerRS_1_N_sf"/>
</dbReference>
<dbReference type="InterPro" id="IPR033729">
    <property type="entry name" value="SerRS_core"/>
</dbReference>
<dbReference type="InterPro" id="IPR010978">
    <property type="entry name" value="tRNA-bd_arm"/>
</dbReference>
<dbReference type="NCBIfam" id="TIGR00414">
    <property type="entry name" value="serS"/>
    <property type="match status" value="1"/>
</dbReference>
<dbReference type="PANTHER" id="PTHR43697:SF1">
    <property type="entry name" value="SERINE--TRNA LIGASE"/>
    <property type="match status" value="1"/>
</dbReference>
<dbReference type="PANTHER" id="PTHR43697">
    <property type="entry name" value="SERYL-TRNA SYNTHETASE"/>
    <property type="match status" value="1"/>
</dbReference>
<dbReference type="Pfam" id="PF02403">
    <property type="entry name" value="Seryl_tRNA_N"/>
    <property type="match status" value="1"/>
</dbReference>
<dbReference type="Pfam" id="PF00587">
    <property type="entry name" value="tRNA-synt_2b"/>
    <property type="match status" value="1"/>
</dbReference>
<dbReference type="PIRSF" id="PIRSF001529">
    <property type="entry name" value="Ser-tRNA-synth_IIa"/>
    <property type="match status" value="1"/>
</dbReference>
<dbReference type="PRINTS" id="PR00981">
    <property type="entry name" value="TRNASYNTHSER"/>
</dbReference>
<dbReference type="SUPFAM" id="SSF55681">
    <property type="entry name" value="Class II aaRS and biotin synthetases"/>
    <property type="match status" value="1"/>
</dbReference>
<dbReference type="SUPFAM" id="SSF46589">
    <property type="entry name" value="tRNA-binding arm"/>
    <property type="match status" value="1"/>
</dbReference>
<dbReference type="PROSITE" id="PS50862">
    <property type="entry name" value="AA_TRNA_LIGASE_II"/>
    <property type="match status" value="1"/>
</dbReference>
<name>SYS_ECO5E</name>